<gene>
    <name type="primary">thoc6</name>
    <name type="ORF">CG5632</name>
</gene>
<dbReference type="EMBL" id="AJ620303">
    <property type="protein sequence ID" value="CAF04330.1"/>
    <property type="molecule type" value="mRNA"/>
</dbReference>
<dbReference type="EMBL" id="AE014296">
    <property type="protein sequence ID" value="AAF49944.1"/>
    <property type="molecule type" value="Genomic_DNA"/>
</dbReference>
<dbReference type="EMBL" id="AY061521">
    <property type="protein sequence ID" value="AAL29069.1"/>
    <property type="molecule type" value="mRNA"/>
</dbReference>
<dbReference type="RefSeq" id="NP_001261750.1">
    <property type="nucleotide sequence ID" value="NM_001274821.1"/>
</dbReference>
<dbReference type="RefSeq" id="NP_001303370.1">
    <property type="nucleotide sequence ID" value="NM_001316441.1"/>
</dbReference>
<dbReference type="RefSeq" id="NP_648557.1">
    <property type="nucleotide sequence ID" value="NM_140300.4"/>
</dbReference>
<dbReference type="SMR" id="Q9VTV1"/>
<dbReference type="BioGRID" id="64748">
    <property type="interactions" value="7"/>
</dbReference>
<dbReference type="ComplexPortal" id="CPX-2261">
    <property type="entry name" value="TREX transcription-export complex"/>
</dbReference>
<dbReference type="FunCoup" id="Q9VTV1">
    <property type="interactions" value="1140"/>
</dbReference>
<dbReference type="IntAct" id="Q9VTV1">
    <property type="interactions" value="1"/>
</dbReference>
<dbReference type="STRING" id="7227.FBpp0312410"/>
<dbReference type="TCDB" id="3.A.22.1.3">
    <property type="family name" value="the transcription-coupled trex/tap nuclear mrna export complex (trex) family"/>
</dbReference>
<dbReference type="PaxDb" id="7227-FBpp0075751"/>
<dbReference type="DNASU" id="39394"/>
<dbReference type="EnsemblMetazoa" id="FBtr0076019">
    <property type="protein sequence ID" value="FBpp0075751"/>
    <property type="gene ID" value="FBgn0036263"/>
</dbReference>
<dbReference type="EnsemblMetazoa" id="FBtr0333384">
    <property type="protein sequence ID" value="FBpp0305576"/>
    <property type="gene ID" value="FBgn0036263"/>
</dbReference>
<dbReference type="EnsemblMetazoa" id="FBtr0346911">
    <property type="protein sequence ID" value="FBpp0312410"/>
    <property type="gene ID" value="FBgn0036263"/>
</dbReference>
<dbReference type="GeneID" id="39394"/>
<dbReference type="KEGG" id="dme:Dmel_CG5632"/>
<dbReference type="UCSC" id="CG5632-RA">
    <property type="organism name" value="d. melanogaster"/>
</dbReference>
<dbReference type="AGR" id="FB:FBgn0036263"/>
<dbReference type="CTD" id="79228"/>
<dbReference type="FlyBase" id="FBgn0036263">
    <property type="gene designation" value="thoc6"/>
</dbReference>
<dbReference type="VEuPathDB" id="VectorBase:FBgn0036263"/>
<dbReference type="eggNOG" id="KOG0649">
    <property type="taxonomic scope" value="Eukaryota"/>
</dbReference>
<dbReference type="HOGENOM" id="CLU_060667_0_0_1"/>
<dbReference type="InParanoid" id="Q9VTV1"/>
<dbReference type="OMA" id="DSYAYCW"/>
<dbReference type="OrthoDB" id="273067at2759"/>
<dbReference type="PhylomeDB" id="Q9VTV1"/>
<dbReference type="Reactome" id="R-DME-159236">
    <property type="pathway name" value="Transport of Mature mRNA derived from an Intron-Containing Transcript"/>
</dbReference>
<dbReference type="Reactome" id="R-DME-72187">
    <property type="pathway name" value="mRNA 3'-end processing"/>
</dbReference>
<dbReference type="Reactome" id="R-DME-73856">
    <property type="pathway name" value="RNA Polymerase II Transcription Termination"/>
</dbReference>
<dbReference type="BioGRID-ORCS" id="39394">
    <property type="hits" value="0 hits in 1 CRISPR screen"/>
</dbReference>
<dbReference type="GenomeRNAi" id="39394"/>
<dbReference type="PRO" id="PR:Q9VTV1"/>
<dbReference type="Proteomes" id="UP000000803">
    <property type="component" value="Chromosome 3L"/>
</dbReference>
<dbReference type="Bgee" id="FBgn0036263">
    <property type="expression patterns" value="Expressed in adult olfactory receptor neuron Or67d (Drosophila) in antenna and 51 other cell types or tissues"/>
</dbReference>
<dbReference type="ExpressionAtlas" id="Q9VTV1">
    <property type="expression patterns" value="baseline and differential"/>
</dbReference>
<dbReference type="GO" id="GO:0000347">
    <property type="term" value="C:THO complex"/>
    <property type="evidence" value="ECO:0000314"/>
    <property type="project" value="UniProtKB"/>
</dbReference>
<dbReference type="GO" id="GO:0000346">
    <property type="term" value="C:transcription export complex"/>
    <property type="evidence" value="ECO:0000250"/>
    <property type="project" value="FlyBase"/>
</dbReference>
<dbReference type="GO" id="GO:0006406">
    <property type="term" value="P:mRNA export from nucleus"/>
    <property type="evidence" value="ECO:0000318"/>
    <property type="project" value="GO_Central"/>
</dbReference>
<dbReference type="GO" id="GO:0031990">
    <property type="term" value="P:mRNA export from nucleus in response to heat stress"/>
    <property type="evidence" value="ECO:0000305"/>
    <property type="project" value="FlyBase"/>
</dbReference>
<dbReference type="FunFam" id="2.130.10.10:FF:002280">
    <property type="entry name" value="Thoc6, isoform B"/>
    <property type="match status" value="1"/>
</dbReference>
<dbReference type="Gene3D" id="2.130.10.10">
    <property type="entry name" value="YVTN repeat-like/Quinoprotein amine dehydrogenase"/>
    <property type="match status" value="1"/>
</dbReference>
<dbReference type="InterPro" id="IPR042626">
    <property type="entry name" value="THOC6"/>
</dbReference>
<dbReference type="InterPro" id="IPR015943">
    <property type="entry name" value="WD40/YVTN_repeat-like_dom_sf"/>
</dbReference>
<dbReference type="InterPro" id="IPR036322">
    <property type="entry name" value="WD40_repeat_dom_sf"/>
</dbReference>
<dbReference type="InterPro" id="IPR001680">
    <property type="entry name" value="WD40_rpt"/>
</dbReference>
<dbReference type="PANTHER" id="PTHR44411">
    <property type="entry name" value="THO COMPLEX SUBUNIT 6 HOMOLOG"/>
    <property type="match status" value="1"/>
</dbReference>
<dbReference type="PANTHER" id="PTHR44411:SF1">
    <property type="entry name" value="THO COMPLEX SUBUNIT 6 HOMOLOG"/>
    <property type="match status" value="1"/>
</dbReference>
<dbReference type="Pfam" id="PF00400">
    <property type="entry name" value="WD40"/>
    <property type="match status" value="1"/>
</dbReference>
<dbReference type="SMART" id="SM00320">
    <property type="entry name" value="WD40"/>
    <property type="match status" value="1"/>
</dbReference>
<dbReference type="SUPFAM" id="SSF50978">
    <property type="entry name" value="WD40 repeat-like"/>
    <property type="match status" value="1"/>
</dbReference>
<dbReference type="PROSITE" id="PS50082">
    <property type="entry name" value="WD_REPEATS_2"/>
    <property type="match status" value="1"/>
</dbReference>
<dbReference type="PROSITE" id="PS50294">
    <property type="entry name" value="WD_REPEATS_REGION"/>
    <property type="match status" value="1"/>
</dbReference>
<keyword id="KW-1185">Reference proteome</keyword>
<keyword id="KW-0853">WD repeat</keyword>
<evidence type="ECO:0000256" key="1">
    <source>
        <dbReference type="SAM" id="MobiDB-lite"/>
    </source>
</evidence>
<evidence type="ECO:0000269" key="2">
    <source>
    </source>
</evidence>
<evidence type="ECO:0000305" key="3"/>
<protein>
    <recommendedName>
        <fullName>THO complex subunit 6</fullName>
    </recommendedName>
</protein>
<reference key="1">
    <citation type="journal article" date="2004" name="Nat. Struct. Mol. Biol.">
        <title>Genome-wide analysis of mRNAs regulated by the THO complex in Drosophila.</title>
        <authorList>
            <person name="Rehwinkel J."/>
            <person name="Herold A."/>
            <person name="Gari K."/>
            <person name="Koecher T."/>
            <person name="Rode M."/>
            <person name="Ciccarelli F.L."/>
            <person name="Wilm M."/>
            <person name="Izaurralde E."/>
        </authorList>
    </citation>
    <scope>NUCLEOTIDE SEQUENCE [MRNA]</scope>
    <scope>FUNCTION</scope>
    <scope>IDENTIFICATION IN THE THO COMPLEX</scope>
</reference>
<reference key="2">
    <citation type="journal article" date="2000" name="Science">
        <title>The genome sequence of Drosophila melanogaster.</title>
        <authorList>
            <person name="Adams M.D."/>
            <person name="Celniker S.E."/>
            <person name="Holt R.A."/>
            <person name="Evans C.A."/>
            <person name="Gocayne J.D."/>
            <person name="Amanatides P.G."/>
            <person name="Scherer S.E."/>
            <person name="Li P.W."/>
            <person name="Hoskins R.A."/>
            <person name="Galle R.F."/>
            <person name="George R.A."/>
            <person name="Lewis S.E."/>
            <person name="Richards S."/>
            <person name="Ashburner M."/>
            <person name="Henderson S.N."/>
            <person name="Sutton G.G."/>
            <person name="Wortman J.R."/>
            <person name="Yandell M.D."/>
            <person name="Zhang Q."/>
            <person name="Chen L.X."/>
            <person name="Brandon R.C."/>
            <person name="Rogers Y.-H.C."/>
            <person name="Blazej R.G."/>
            <person name="Champe M."/>
            <person name="Pfeiffer B.D."/>
            <person name="Wan K.H."/>
            <person name="Doyle C."/>
            <person name="Baxter E.G."/>
            <person name="Helt G."/>
            <person name="Nelson C.R."/>
            <person name="Miklos G.L.G."/>
            <person name="Abril J.F."/>
            <person name="Agbayani A."/>
            <person name="An H.-J."/>
            <person name="Andrews-Pfannkoch C."/>
            <person name="Baldwin D."/>
            <person name="Ballew R.M."/>
            <person name="Basu A."/>
            <person name="Baxendale J."/>
            <person name="Bayraktaroglu L."/>
            <person name="Beasley E.M."/>
            <person name="Beeson K.Y."/>
            <person name="Benos P.V."/>
            <person name="Berman B.P."/>
            <person name="Bhandari D."/>
            <person name="Bolshakov S."/>
            <person name="Borkova D."/>
            <person name="Botchan M.R."/>
            <person name="Bouck J."/>
            <person name="Brokstein P."/>
            <person name="Brottier P."/>
            <person name="Burtis K.C."/>
            <person name="Busam D.A."/>
            <person name="Butler H."/>
            <person name="Cadieu E."/>
            <person name="Center A."/>
            <person name="Chandra I."/>
            <person name="Cherry J.M."/>
            <person name="Cawley S."/>
            <person name="Dahlke C."/>
            <person name="Davenport L.B."/>
            <person name="Davies P."/>
            <person name="de Pablos B."/>
            <person name="Delcher A."/>
            <person name="Deng Z."/>
            <person name="Mays A.D."/>
            <person name="Dew I."/>
            <person name="Dietz S.M."/>
            <person name="Dodson K."/>
            <person name="Doup L.E."/>
            <person name="Downes M."/>
            <person name="Dugan-Rocha S."/>
            <person name="Dunkov B.C."/>
            <person name="Dunn P."/>
            <person name="Durbin K.J."/>
            <person name="Evangelista C.C."/>
            <person name="Ferraz C."/>
            <person name="Ferriera S."/>
            <person name="Fleischmann W."/>
            <person name="Fosler C."/>
            <person name="Gabrielian A.E."/>
            <person name="Garg N.S."/>
            <person name="Gelbart W.M."/>
            <person name="Glasser K."/>
            <person name="Glodek A."/>
            <person name="Gong F."/>
            <person name="Gorrell J.H."/>
            <person name="Gu Z."/>
            <person name="Guan P."/>
            <person name="Harris M."/>
            <person name="Harris N.L."/>
            <person name="Harvey D.A."/>
            <person name="Heiman T.J."/>
            <person name="Hernandez J.R."/>
            <person name="Houck J."/>
            <person name="Hostin D."/>
            <person name="Houston K.A."/>
            <person name="Howland T.J."/>
            <person name="Wei M.-H."/>
            <person name="Ibegwam C."/>
            <person name="Jalali M."/>
            <person name="Kalush F."/>
            <person name="Karpen G.H."/>
            <person name="Ke Z."/>
            <person name="Kennison J.A."/>
            <person name="Ketchum K.A."/>
            <person name="Kimmel B.E."/>
            <person name="Kodira C.D."/>
            <person name="Kraft C.L."/>
            <person name="Kravitz S."/>
            <person name="Kulp D."/>
            <person name="Lai Z."/>
            <person name="Lasko P."/>
            <person name="Lei Y."/>
            <person name="Levitsky A.A."/>
            <person name="Li J.H."/>
            <person name="Li Z."/>
            <person name="Liang Y."/>
            <person name="Lin X."/>
            <person name="Liu X."/>
            <person name="Mattei B."/>
            <person name="McIntosh T.C."/>
            <person name="McLeod M.P."/>
            <person name="McPherson D."/>
            <person name="Merkulov G."/>
            <person name="Milshina N.V."/>
            <person name="Mobarry C."/>
            <person name="Morris J."/>
            <person name="Moshrefi A."/>
            <person name="Mount S.M."/>
            <person name="Moy M."/>
            <person name="Murphy B."/>
            <person name="Murphy L."/>
            <person name="Muzny D.M."/>
            <person name="Nelson D.L."/>
            <person name="Nelson D.R."/>
            <person name="Nelson K.A."/>
            <person name="Nixon K."/>
            <person name="Nusskern D.R."/>
            <person name="Pacleb J.M."/>
            <person name="Palazzolo M."/>
            <person name="Pittman G.S."/>
            <person name="Pan S."/>
            <person name="Pollard J."/>
            <person name="Puri V."/>
            <person name="Reese M.G."/>
            <person name="Reinert K."/>
            <person name="Remington K."/>
            <person name="Saunders R.D.C."/>
            <person name="Scheeler F."/>
            <person name="Shen H."/>
            <person name="Shue B.C."/>
            <person name="Siden-Kiamos I."/>
            <person name="Simpson M."/>
            <person name="Skupski M.P."/>
            <person name="Smith T.J."/>
            <person name="Spier E."/>
            <person name="Spradling A.C."/>
            <person name="Stapleton M."/>
            <person name="Strong R."/>
            <person name="Sun E."/>
            <person name="Svirskas R."/>
            <person name="Tector C."/>
            <person name="Turner R."/>
            <person name="Venter E."/>
            <person name="Wang A.H."/>
            <person name="Wang X."/>
            <person name="Wang Z.-Y."/>
            <person name="Wassarman D.A."/>
            <person name="Weinstock G.M."/>
            <person name="Weissenbach J."/>
            <person name="Williams S.M."/>
            <person name="Woodage T."/>
            <person name="Worley K.C."/>
            <person name="Wu D."/>
            <person name="Yang S."/>
            <person name="Yao Q.A."/>
            <person name="Ye J."/>
            <person name="Yeh R.-F."/>
            <person name="Zaveri J.S."/>
            <person name="Zhan M."/>
            <person name="Zhang G."/>
            <person name="Zhao Q."/>
            <person name="Zheng L."/>
            <person name="Zheng X.H."/>
            <person name="Zhong F.N."/>
            <person name="Zhong W."/>
            <person name="Zhou X."/>
            <person name="Zhu S.C."/>
            <person name="Zhu X."/>
            <person name="Smith H.O."/>
            <person name="Gibbs R.A."/>
            <person name="Myers E.W."/>
            <person name="Rubin G.M."/>
            <person name="Venter J.C."/>
        </authorList>
    </citation>
    <scope>NUCLEOTIDE SEQUENCE [LARGE SCALE GENOMIC DNA]</scope>
    <source>
        <strain>Berkeley</strain>
    </source>
</reference>
<reference key="3">
    <citation type="journal article" date="2002" name="Genome Biol.">
        <title>Annotation of the Drosophila melanogaster euchromatic genome: a systematic review.</title>
        <authorList>
            <person name="Misra S."/>
            <person name="Crosby M.A."/>
            <person name="Mungall C.J."/>
            <person name="Matthews B.B."/>
            <person name="Campbell K.S."/>
            <person name="Hradecky P."/>
            <person name="Huang Y."/>
            <person name="Kaminker J.S."/>
            <person name="Millburn G.H."/>
            <person name="Prochnik S.E."/>
            <person name="Smith C.D."/>
            <person name="Tupy J.L."/>
            <person name="Whitfield E.J."/>
            <person name="Bayraktaroglu L."/>
            <person name="Berman B.P."/>
            <person name="Bettencourt B.R."/>
            <person name="Celniker S.E."/>
            <person name="de Grey A.D.N.J."/>
            <person name="Drysdale R.A."/>
            <person name="Harris N.L."/>
            <person name="Richter J."/>
            <person name="Russo S."/>
            <person name="Schroeder A.J."/>
            <person name="Shu S.Q."/>
            <person name="Stapleton M."/>
            <person name="Yamada C."/>
            <person name="Ashburner M."/>
            <person name="Gelbart W.M."/>
            <person name="Rubin G.M."/>
            <person name="Lewis S.E."/>
        </authorList>
    </citation>
    <scope>GENOME REANNOTATION</scope>
    <source>
        <strain>Berkeley</strain>
    </source>
</reference>
<reference key="4">
    <citation type="journal article" date="2002" name="Genome Biol.">
        <title>A Drosophila full-length cDNA resource.</title>
        <authorList>
            <person name="Stapleton M."/>
            <person name="Carlson J.W."/>
            <person name="Brokstein P."/>
            <person name="Yu C."/>
            <person name="Champe M."/>
            <person name="George R.A."/>
            <person name="Guarin H."/>
            <person name="Kronmiller B."/>
            <person name="Pacleb J.M."/>
            <person name="Park S."/>
            <person name="Wan K.H."/>
            <person name="Rubin G.M."/>
            <person name="Celniker S.E."/>
        </authorList>
    </citation>
    <scope>NUCLEOTIDE SEQUENCE [LARGE SCALE MRNA]</scope>
    <source>
        <strain>Berkeley</strain>
        <tissue>Embryo</tissue>
    </source>
</reference>
<comment type="function">
    <text evidence="2">The THO complex is required for cell proliferation and for proper export of heat-shock mRNAs under heat stress.</text>
</comment>
<comment type="subunit">
    <text evidence="2">Part of the THO complex containing HPR1, THOC2, THOC5, THOC6 and THOC7.</text>
</comment>
<comment type="similarity">
    <text evidence="3">Belongs to the WD repeat THOC6 family.</text>
</comment>
<organism>
    <name type="scientific">Drosophila melanogaster</name>
    <name type="common">Fruit fly</name>
    <dbReference type="NCBI Taxonomy" id="7227"/>
    <lineage>
        <taxon>Eukaryota</taxon>
        <taxon>Metazoa</taxon>
        <taxon>Ecdysozoa</taxon>
        <taxon>Arthropoda</taxon>
        <taxon>Hexapoda</taxon>
        <taxon>Insecta</taxon>
        <taxon>Pterygota</taxon>
        <taxon>Neoptera</taxon>
        <taxon>Endopterygota</taxon>
        <taxon>Diptera</taxon>
        <taxon>Brachycera</taxon>
        <taxon>Muscomorpha</taxon>
        <taxon>Ephydroidea</taxon>
        <taxon>Drosophilidae</taxon>
        <taxon>Drosophila</taxon>
        <taxon>Sophophora</taxon>
    </lineage>
</organism>
<feature type="chain" id="PRO_0000310752" description="THO complex subunit 6">
    <location>
        <begin position="1"/>
        <end position="350"/>
    </location>
</feature>
<feature type="repeat" description="WD">
    <location>
        <begin position="151"/>
        <end position="191"/>
    </location>
</feature>
<feature type="region of interest" description="Disordered" evidence="1">
    <location>
        <begin position="328"/>
        <end position="350"/>
    </location>
</feature>
<feature type="compositionally biased region" description="Acidic residues" evidence="1">
    <location>
        <begin position="328"/>
        <end position="340"/>
    </location>
</feature>
<feature type="sequence conflict" description="In Ref. 1; CAF04330." evidence="3" ref="1">
    <original>VL</original>
    <variation>IP</variation>
    <location>
        <begin position="36"/>
        <end position="37"/>
    </location>
</feature>
<feature type="sequence conflict" description="In Ref. 1; CAF04330." evidence="3" ref="1">
    <original>I</original>
    <variation>T</variation>
    <location>
        <position position="127"/>
    </location>
</feature>
<proteinExistence type="evidence at protein level"/>
<name>THOC6_DROME</name>
<accession>Q9VTV1</accession>
<accession>Q705B9</accession>
<sequence>MKQKDLKRAYNNVLAQAISGSKQYLFAGNLFGDIFVLRIKELDKGSEEPPGKLKIFPQGSDVDINYLAFHRDFLIVGAVGLIYGLEWNEEEESLATKRSWEVKIPMQVDAVEVPDVNSMWLDSENSILFAGCGDGVIYQVSLEDGRIQREYRGHTDYVHSVVGNANGQIFSGAEDGTVRVWSTKQQQHTSMLEPYKNPNLLRPDWGKWIGAVAVNEDWLLCGGGPKASIFHLRSMESTCVFSFPGRVHLCDFVDDCVLIGGEHNHVQSYTLNGVLQANIPVEHTACYSAVWQTSPIKFISIAGFSNKLHILKDFRFLDSKIEMYGNVEGEENDPEEEDELIEKPLTVEAA</sequence>